<keyword id="KW-0028">Amino-acid biosynthesis</keyword>
<keyword id="KW-0057">Aromatic amino acid biosynthesis</keyword>
<keyword id="KW-0521">NADP</keyword>
<keyword id="KW-0560">Oxidoreductase</keyword>
<keyword id="KW-1185">Reference proteome</keyword>
<feature type="chain" id="PRO_1000021359" description="Shikimate dehydrogenase (NADP(+))">
    <location>
        <begin position="1"/>
        <end position="269"/>
    </location>
</feature>
<feature type="active site" description="Proton acceptor" evidence="1">
    <location>
        <position position="65"/>
    </location>
</feature>
<feature type="binding site" evidence="1">
    <location>
        <begin position="14"/>
        <end position="16"/>
    </location>
    <ligand>
        <name>shikimate</name>
        <dbReference type="ChEBI" id="CHEBI:36208"/>
    </ligand>
</feature>
<feature type="binding site" evidence="1">
    <location>
        <position position="61"/>
    </location>
    <ligand>
        <name>shikimate</name>
        <dbReference type="ChEBI" id="CHEBI:36208"/>
    </ligand>
</feature>
<feature type="binding site" evidence="1">
    <location>
        <position position="77"/>
    </location>
    <ligand>
        <name>NADP(+)</name>
        <dbReference type="ChEBI" id="CHEBI:58349"/>
    </ligand>
</feature>
<feature type="binding site" evidence="1">
    <location>
        <position position="86"/>
    </location>
    <ligand>
        <name>shikimate</name>
        <dbReference type="ChEBI" id="CHEBI:36208"/>
    </ligand>
</feature>
<feature type="binding site" evidence="1">
    <location>
        <position position="102"/>
    </location>
    <ligand>
        <name>shikimate</name>
        <dbReference type="ChEBI" id="CHEBI:36208"/>
    </ligand>
</feature>
<feature type="binding site" evidence="1">
    <location>
        <begin position="126"/>
        <end position="130"/>
    </location>
    <ligand>
        <name>NADP(+)</name>
        <dbReference type="ChEBI" id="CHEBI:58349"/>
    </ligand>
</feature>
<feature type="binding site" evidence="1">
    <location>
        <begin position="150"/>
        <end position="155"/>
    </location>
    <ligand>
        <name>NADP(+)</name>
        <dbReference type="ChEBI" id="CHEBI:58349"/>
    </ligand>
</feature>
<feature type="binding site" evidence="1">
    <location>
        <position position="213"/>
    </location>
    <ligand>
        <name>NADP(+)</name>
        <dbReference type="ChEBI" id="CHEBI:58349"/>
    </ligand>
</feature>
<feature type="binding site" evidence="1">
    <location>
        <position position="215"/>
    </location>
    <ligand>
        <name>shikimate</name>
        <dbReference type="ChEBI" id="CHEBI:36208"/>
    </ligand>
</feature>
<feature type="binding site" evidence="1">
    <location>
        <position position="237"/>
    </location>
    <ligand>
        <name>NADP(+)</name>
        <dbReference type="ChEBI" id="CHEBI:58349"/>
    </ligand>
</feature>
<sequence length="269" mass="29490">MDKYAVFGNPIKHSKSPFIHTLFARQTMQDLEYSAIEAPINGFVESVTAFFSQQGKGCNVTVPFKEEAFQFADQLTERAKLAGAVNTLKKLDDGIILGDNTDGEGLVQDLLQYQVPLEDKHILLIGAGGAARGVILPLLKQNPASITLVNRTYEKAKQLAELFSPYGRIEAKKMSDINKGFDVIINSTSASLSGELPQIDPVIFSGGAISYDMMYGSGKTIFNQWALKNDAYQAYDGLGMLVGQAAESFTVWRGLRPGSKQILRELRKT</sequence>
<dbReference type="EC" id="1.1.1.25" evidence="1"/>
<dbReference type="EMBL" id="CP000020">
    <property type="protein sequence ID" value="AAW87030.1"/>
    <property type="molecule type" value="Genomic_DNA"/>
</dbReference>
<dbReference type="RefSeq" id="WP_011262878.1">
    <property type="nucleotide sequence ID" value="NC_006840.2"/>
</dbReference>
<dbReference type="RefSeq" id="YP_205918.1">
    <property type="nucleotide sequence ID" value="NC_006840.2"/>
</dbReference>
<dbReference type="SMR" id="Q5E1R6"/>
<dbReference type="STRING" id="312309.VF_2535"/>
<dbReference type="EnsemblBacteria" id="AAW87030">
    <property type="protein sequence ID" value="AAW87030"/>
    <property type="gene ID" value="VF_2535"/>
</dbReference>
<dbReference type="GeneID" id="54165285"/>
<dbReference type="KEGG" id="vfi:VF_2535"/>
<dbReference type="PATRIC" id="fig|312309.11.peg.2561"/>
<dbReference type="eggNOG" id="COG0169">
    <property type="taxonomic scope" value="Bacteria"/>
</dbReference>
<dbReference type="HOGENOM" id="CLU_044063_2_1_6"/>
<dbReference type="OrthoDB" id="9776868at2"/>
<dbReference type="UniPathway" id="UPA00053">
    <property type="reaction ID" value="UER00087"/>
</dbReference>
<dbReference type="Proteomes" id="UP000000537">
    <property type="component" value="Chromosome I"/>
</dbReference>
<dbReference type="GO" id="GO:0005829">
    <property type="term" value="C:cytosol"/>
    <property type="evidence" value="ECO:0007669"/>
    <property type="project" value="TreeGrafter"/>
</dbReference>
<dbReference type="GO" id="GO:0050661">
    <property type="term" value="F:NADP binding"/>
    <property type="evidence" value="ECO:0007669"/>
    <property type="project" value="InterPro"/>
</dbReference>
<dbReference type="GO" id="GO:0004764">
    <property type="term" value="F:shikimate 3-dehydrogenase (NADP+) activity"/>
    <property type="evidence" value="ECO:0007669"/>
    <property type="project" value="UniProtKB-UniRule"/>
</dbReference>
<dbReference type="GO" id="GO:0008652">
    <property type="term" value="P:amino acid biosynthetic process"/>
    <property type="evidence" value="ECO:0007669"/>
    <property type="project" value="UniProtKB-KW"/>
</dbReference>
<dbReference type="GO" id="GO:0009073">
    <property type="term" value="P:aromatic amino acid family biosynthetic process"/>
    <property type="evidence" value="ECO:0007669"/>
    <property type="project" value="UniProtKB-KW"/>
</dbReference>
<dbReference type="GO" id="GO:0009423">
    <property type="term" value="P:chorismate biosynthetic process"/>
    <property type="evidence" value="ECO:0007669"/>
    <property type="project" value="UniProtKB-UniRule"/>
</dbReference>
<dbReference type="GO" id="GO:0019632">
    <property type="term" value="P:shikimate metabolic process"/>
    <property type="evidence" value="ECO:0007669"/>
    <property type="project" value="InterPro"/>
</dbReference>
<dbReference type="CDD" id="cd01065">
    <property type="entry name" value="NAD_bind_Shikimate_DH"/>
    <property type="match status" value="1"/>
</dbReference>
<dbReference type="FunFam" id="3.40.50.10860:FF:000006">
    <property type="entry name" value="Shikimate dehydrogenase (NADP(+))"/>
    <property type="match status" value="1"/>
</dbReference>
<dbReference type="FunFam" id="3.40.50.720:FF:000104">
    <property type="entry name" value="Shikimate dehydrogenase (NADP(+))"/>
    <property type="match status" value="1"/>
</dbReference>
<dbReference type="Gene3D" id="3.40.50.10860">
    <property type="entry name" value="Leucine Dehydrogenase, chain A, domain 1"/>
    <property type="match status" value="1"/>
</dbReference>
<dbReference type="Gene3D" id="3.40.50.720">
    <property type="entry name" value="NAD(P)-binding Rossmann-like Domain"/>
    <property type="match status" value="1"/>
</dbReference>
<dbReference type="HAMAP" id="MF_00222">
    <property type="entry name" value="Shikimate_DH_AroE"/>
    <property type="match status" value="1"/>
</dbReference>
<dbReference type="InterPro" id="IPR046346">
    <property type="entry name" value="Aminoacid_DH-like_N_sf"/>
</dbReference>
<dbReference type="InterPro" id="IPR036291">
    <property type="entry name" value="NAD(P)-bd_dom_sf"/>
</dbReference>
<dbReference type="InterPro" id="IPR041121">
    <property type="entry name" value="SDH_C"/>
</dbReference>
<dbReference type="InterPro" id="IPR011342">
    <property type="entry name" value="Shikimate_DH"/>
</dbReference>
<dbReference type="InterPro" id="IPR013708">
    <property type="entry name" value="Shikimate_DH-bd_N"/>
</dbReference>
<dbReference type="InterPro" id="IPR022893">
    <property type="entry name" value="Shikimate_DH_fam"/>
</dbReference>
<dbReference type="InterPro" id="IPR006151">
    <property type="entry name" value="Shikm_DH/Glu-tRNA_Rdtase"/>
</dbReference>
<dbReference type="NCBIfam" id="TIGR00507">
    <property type="entry name" value="aroE"/>
    <property type="match status" value="1"/>
</dbReference>
<dbReference type="NCBIfam" id="NF001310">
    <property type="entry name" value="PRK00258.1-2"/>
    <property type="match status" value="1"/>
</dbReference>
<dbReference type="PANTHER" id="PTHR21089:SF1">
    <property type="entry name" value="BIFUNCTIONAL 3-DEHYDROQUINATE DEHYDRATASE_SHIKIMATE DEHYDROGENASE, CHLOROPLASTIC"/>
    <property type="match status" value="1"/>
</dbReference>
<dbReference type="PANTHER" id="PTHR21089">
    <property type="entry name" value="SHIKIMATE DEHYDROGENASE"/>
    <property type="match status" value="1"/>
</dbReference>
<dbReference type="Pfam" id="PF18317">
    <property type="entry name" value="SDH_C"/>
    <property type="match status" value="1"/>
</dbReference>
<dbReference type="Pfam" id="PF01488">
    <property type="entry name" value="Shikimate_DH"/>
    <property type="match status" value="1"/>
</dbReference>
<dbReference type="Pfam" id="PF08501">
    <property type="entry name" value="Shikimate_dh_N"/>
    <property type="match status" value="1"/>
</dbReference>
<dbReference type="SUPFAM" id="SSF53223">
    <property type="entry name" value="Aminoacid dehydrogenase-like, N-terminal domain"/>
    <property type="match status" value="1"/>
</dbReference>
<dbReference type="SUPFAM" id="SSF51735">
    <property type="entry name" value="NAD(P)-binding Rossmann-fold domains"/>
    <property type="match status" value="1"/>
</dbReference>
<organism>
    <name type="scientific">Aliivibrio fischeri (strain ATCC 700601 / ES114)</name>
    <name type="common">Vibrio fischeri</name>
    <dbReference type="NCBI Taxonomy" id="312309"/>
    <lineage>
        <taxon>Bacteria</taxon>
        <taxon>Pseudomonadati</taxon>
        <taxon>Pseudomonadota</taxon>
        <taxon>Gammaproteobacteria</taxon>
        <taxon>Vibrionales</taxon>
        <taxon>Vibrionaceae</taxon>
        <taxon>Aliivibrio</taxon>
    </lineage>
</organism>
<reference key="1">
    <citation type="journal article" date="2005" name="Proc. Natl. Acad. Sci. U.S.A.">
        <title>Complete genome sequence of Vibrio fischeri: a symbiotic bacterium with pathogenic congeners.</title>
        <authorList>
            <person name="Ruby E.G."/>
            <person name="Urbanowski M."/>
            <person name="Campbell J."/>
            <person name="Dunn A."/>
            <person name="Faini M."/>
            <person name="Gunsalus R."/>
            <person name="Lostroh P."/>
            <person name="Lupp C."/>
            <person name="McCann J."/>
            <person name="Millikan D."/>
            <person name="Schaefer A."/>
            <person name="Stabb E."/>
            <person name="Stevens A."/>
            <person name="Visick K."/>
            <person name="Whistler C."/>
            <person name="Greenberg E.P."/>
        </authorList>
    </citation>
    <scope>NUCLEOTIDE SEQUENCE [LARGE SCALE GENOMIC DNA]</scope>
    <source>
        <strain>ATCC 700601 / ES114</strain>
    </source>
</reference>
<comment type="function">
    <text evidence="1">Involved in the biosynthesis of the chorismate, which leads to the biosynthesis of aromatic amino acids. Catalyzes the reversible NADPH linked reduction of 3-dehydroshikimate (DHSA) to yield shikimate (SA).</text>
</comment>
<comment type="catalytic activity">
    <reaction evidence="1">
        <text>shikimate + NADP(+) = 3-dehydroshikimate + NADPH + H(+)</text>
        <dbReference type="Rhea" id="RHEA:17737"/>
        <dbReference type="ChEBI" id="CHEBI:15378"/>
        <dbReference type="ChEBI" id="CHEBI:16630"/>
        <dbReference type="ChEBI" id="CHEBI:36208"/>
        <dbReference type="ChEBI" id="CHEBI:57783"/>
        <dbReference type="ChEBI" id="CHEBI:58349"/>
        <dbReference type="EC" id="1.1.1.25"/>
    </reaction>
</comment>
<comment type="pathway">
    <text evidence="1">Metabolic intermediate biosynthesis; chorismate biosynthesis; chorismate from D-erythrose 4-phosphate and phosphoenolpyruvate: step 4/7.</text>
</comment>
<comment type="subunit">
    <text evidence="1">Homodimer.</text>
</comment>
<comment type="similarity">
    <text evidence="1">Belongs to the shikimate dehydrogenase family.</text>
</comment>
<evidence type="ECO:0000255" key="1">
    <source>
        <dbReference type="HAMAP-Rule" id="MF_00222"/>
    </source>
</evidence>
<name>AROE_ALIF1</name>
<accession>Q5E1R6</accession>
<gene>
    <name evidence="1" type="primary">aroE</name>
    <name type="ordered locus">VF_2535</name>
</gene>
<protein>
    <recommendedName>
        <fullName evidence="1">Shikimate dehydrogenase (NADP(+))</fullName>
        <shortName evidence="1">SDH</shortName>
        <ecNumber evidence="1">1.1.1.25</ecNumber>
    </recommendedName>
</protein>
<proteinExistence type="inferred from homology"/>